<dbReference type="RefSeq" id="XP_003316492.1">
    <property type="nucleotide sequence ID" value="XM_003316444.3"/>
</dbReference>
<dbReference type="RefSeq" id="XP_003953571.1">
    <property type="nucleotide sequence ID" value="XM_003953522.2"/>
</dbReference>
<dbReference type="SMR" id="P0CE38"/>
<dbReference type="FunCoup" id="P0CE38">
    <property type="interactions" value="6"/>
</dbReference>
<dbReference type="STRING" id="9598.ENSPTRP00000070626"/>
<dbReference type="PaxDb" id="9598-ENSPTRP00000043051"/>
<dbReference type="Ensembl" id="ENSPTRT00000046577.4">
    <property type="protein sequence ID" value="ENSPTRP00000043051.3"/>
    <property type="gene ID" value="ENSPTRG00000011128.5"/>
</dbReference>
<dbReference type="GeneID" id="743864"/>
<dbReference type="KEGG" id="ptr:743864"/>
<dbReference type="CTD" id="341"/>
<dbReference type="VGNC" id="VGNC:10193">
    <property type="gene designation" value="APOC1"/>
</dbReference>
<dbReference type="eggNOG" id="ENOG502SEU4">
    <property type="taxonomic scope" value="Eukaryota"/>
</dbReference>
<dbReference type="GeneTree" id="ENSGT00390000011584"/>
<dbReference type="HOGENOM" id="CLU_160094_1_0_1"/>
<dbReference type="InParanoid" id="P0CE38"/>
<dbReference type="OMA" id="GTSTRNW"/>
<dbReference type="TreeFam" id="TF330940"/>
<dbReference type="Proteomes" id="UP000002277">
    <property type="component" value="Chromosome 19"/>
</dbReference>
<dbReference type="Bgee" id="ENSPTRG00000011128">
    <property type="expression patterns" value="Expressed in liver and 18 other cell types or tissues"/>
</dbReference>
<dbReference type="GO" id="GO:0034364">
    <property type="term" value="C:high-density lipoprotein particle"/>
    <property type="evidence" value="ECO:0000318"/>
    <property type="project" value="GO_Central"/>
</dbReference>
<dbReference type="GO" id="GO:0034361">
    <property type="term" value="C:very-low-density lipoprotein particle"/>
    <property type="evidence" value="ECO:0000318"/>
    <property type="project" value="GO_Central"/>
</dbReference>
<dbReference type="GO" id="GO:0005504">
    <property type="term" value="F:fatty acid binding"/>
    <property type="evidence" value="ECO:0000318"/>
    <property type="project" value="GO_Central"/>
</dbReference>
<dbReference type="GO" id="GO:0004859">
    <property type="term" value="F:phospholipase inhibitor activity"/>
    <property type="evidence" value="ECO:0000318"/>
    <property type="project" value="GO_Central"/>
</dbReference>
<dbReference type="GO" id="GO:0006869">
    <property type="term" value="P:lipid transport"/>
    <property type="evidence" value="ECO:0007669"/>
    <property type="project" value="UniProtKB-KW"/>
</dbReference>
<dbReference type="GO" id="GO:0042157">
    <property type="term" value="P:lipoprotein metabolic process"/>
    <property type="evidence" value="ECO:0007669"/>
    <property type="project" value="InterPro"/>
</dbReference>
<dbReference type="GO" id="GO:0032375">
    <property type="term" value="P:negative regulation of cholesterol transport"/>
    <property type="evidence" value="ECO:0000318"/>
    <property type="project" value="GO_Central"/>
</dbReference>
<dbReference type="GO" id="GO:0050995">
    <property type="term" value="P:negative regulation of lipid catabolic process"/>
    <property type="evidence" value="ECO:0000318"/>
    <property type="project" value="GO_Central"/>
</dbReference>
<dbReference type="GO" id="GO:0010916">
    <property type="term" value="P:negative regulation of very-low-density lipoprotein particle clearance"/>
    <property type="evidence" value="ECO:0000318"/>
    <property type="project" value="GO_Central"/>
</dbReference>
<dbReference type="GO" id="GO:0006641">
    <property type="term" value="P:triglyceride metabolic process"/>
    <property type="evidence" value="ECO:0000318"/>
    <property type="project" value="GO_Central"/>
</dbReference>
<dbReference type="GO" id="GO:0034447">
    <property type="term" value="P:very-low-density lipoprotein particle clearance"/>
    <property type="evidence" value="ECO:0000318"/>
    <property type="project" value="GO_Central"/>
</dbReference>
<dbReference type="FunFam" id="4.10.260.30:FF:000001">
    <property type="entry name" value="Apolipoprotein C-I"/>
    <property type="match status" value="1"/>
</dbReference>
<dbReference type="Gene3D" id="4.10.260.30">
    <property type="entry name" value="Apolipoprotein C-I"/>
    <property type="match status" value="1"/>
</dbReference>
<dbReference type="InterPro" id="IPR043081">
    <property type="entry name" value="ApoC-1_sf"/>
</dbReference>
<dbReference type="InterPro" id="IPR006781">
    <property type="entry name" value="ApoC-I"/>
</dbReference>
<dbReference type="PANTHER" id="PTHR16565">
    <property type="entry name" value="APOLIPOPROTEIN C-I"/>
    <property type="match status" value="1"/>
</dbReference>
<dbReference type="PANTHER" id="PTHR16565:SF2">
    <property type="entry name" value="APOLIPOPROTEIN C-I"/>
    <property type="match status" value="1"/>
</dbReference>
<dbReference type="Pfam" id="PF04691">
    <property type="entry name" value="ApoC-I"/>
    <property type="match status" value="1"/>
</dbReference>
<keyword id="KW-0445">Lipid transport</keyword>
<keyword id="KW-1185">Reference proteome</keyword>
<keyword id="KW-0964">Secreted</keyword>
<keyword id="KW-0732">Signal</keyword>
<keyword id="KW-0813">Transport</keyword>
<feature type="signal peptide" evidence="5">
    <location>
        <begin position="1"/>
        <end position="26"/>
    </location>
</feature>
<feature type="chain" id="PRO_0000391836" description="Apolipoprotein C-I, basic form">
    <location>
        <begin position="27"/>
        <end position="83"/>
    </location>
</feature>
<feature type="chain" id="PRO_0000436804" description="Cholesteryl ester transfer inhibitor protein" evidence="3">
    <location>
        <begin position="27"/>
        <end position="64"/>
    </location>
</feature>
<feature type="chain" id="PRO_0000391837" description="Truncated apolipoprotein C-I, basic form" evidence="4">
    <location>
        <begin position="29"/>
        <end position="83"/>
    </location>
</feature>
<evidence type="ECO:0000250" key="1">
    <source>
        <dbReference type="UniProtKB" id="P02654"/>
    </source>
</evidence>
<evidence type="ECO:0000250" key="2">
    <source>
        <dbReference type="UniProtKB" id="P33047"/>
    </source>
</evidence>
<evidence type="ECO:0000250" key="3">
    <source>
        <dbReference type="UniProtKB" id="P34929"/>
    </source>
</evidence>
<evidence type="ECO:0000250" key="4">
    <source>
        <dbReference type="UniProtKB" id="P86336"/>
    </source>
</evidence>
<evidence type="ECO:0000255" key="5"/>
<evidence type="ECO:0000269" key="6">
    <source>
    </source>
</evidence>
<evidence type="ECO:0000303" key="7">
    <source>
    </source>
</evidence>
<evidence type="ECO:0000305" key="8"/>
<comment type="function">
    <text evidence="1 2">Inhibitor of lipoprotein binding to the low density lipoprotein (LDL) receptor, LDL receptor-related protein, and very low density lipoprotein (VLDL) receptor. Associates with high density lipoproteins (HDL) and the triacylglycerol-rich lipoproteins in the plasma and makes up about 10% of the protein of the VLDL and 2% of that of HDL. Appears to interfere directly with fatty acid uptake and is also the major plasma inhibitor of cholesteryl ester transfer protein (CETP). Binds free fatty acids and reduces their intracellular esterification. Modulates the interaction of APOE with beta-migrating VLDL and inhibits binding of beta-VLDL to the LDL receptor-related protein.</text>
</comment>
<comment type="subcellular location">
    <subcellularLocation>
        <location evidence="1">Secreted</location>
    </subcellularLocation>
</comment>
<comment type="mass spectrometry" mass="6658.0" method="Electrospray" evidence="6">
    <molecule>Apolipoprotein C-I, basic form</molecule>
</comment>
<comment type="mass spectrometry" mass="6461.0" method="Electrospray" evidence="6">
    <molecule>Truncated apolipoprotein C-I, basic form</molecule>
</comment>
<comment type="miscellaneous">
    <text evidence="7">Apolipoprotein C-I is present in acidic (APOC1A) and basic (APOC1B) forms in P.paniscus, P.abelii and P.troglodytes and perhaps also in baboons and macaques. The two genes for ApoC-I arose through a duplication process that occurred after the divergence of New World monkeys from the human lineage. In human, the acidic form has become a pseudogene sometime between the divergence of bonobos and chimpanzees from the human lineage and the appearance of the Denisovans. Pseudogenization resulted when the codon for the penultimate amino acid in the signal sequence was changed to a stop codon.</text>
</comment>
<comment type="similarity">
    <text evidence="8">Belongs to the apolipoprotein C1 family.</text>
</comment>
<reference key="1">
    <citation type="journal article" date="2005" name="Nature">
        <title>Initial sequence of the chimpanzee genome and comparison with the human genome.</title>
        <authorList>
            <consortium name="Chimpanzee sequencing and analysis consortium"/>
        </authorList>
    </citation>
    <scope>NUCLEOTIDE SEQUENCE [LARGE SCALE GENOMIC DNA]</scope>
</reference>
<reference key="2">
    <citation type="journal article" date="2010" name="Comp. Biochem. Physiol.">
        <title>Detection of two distinct forms of apoC-I in great apes.</title>
        <authorList>
            <person name="Puppione D.L."/>
            <person name="Ryan C.M."/>
            <person name="Bassilian S."/>
            <person name="Souda P."/>
            <person name="Xiao X."/>
            <person name="Ryder O.A."/>
            <person name="Whitelegge J.P."/>
        </authorList>
    </citation>
    <scope>IDENTIFICATION</scope>
    <scope>MASS SPECTROMETRY</scope>
</reference>
<reference key="3">
    <citation type="journal article" date="2013" name="Front. Biol.">
        <title>Proteogenomic Review of the Changes in Primate apoC-I during Evolution.</title>
        <authorList>
            <person name="Puppione D."/>
            <person name="Whitelegge J.P."/>
        </authorList>
    </citation>
    <scope>REVIEW</scope>
</reference>
<reference key="4">
    <citation type="journal article" date="2014" name="Comp. Biochem. Physiol.">
        <title>Higher primates, but not New World monkeys, have a duplicate set of enhancers flanking their apoC-I genes.</title>
        <authorList>
            <person name="Puppione D.L."/>
        </authorList>
    </citation>
    <scope>GENE DUPLICATION</scope>
</reference>
<accession>P0CE38</accession>
<sequence length="83" mass="9359">MRLFLSLPVLVVVLSIVLEGPAPAQGTPDVSSALDKLKEFGNTLEDKARELISRIKQNELSAKMREWFSETFQKVKEKLKIDS</sequence>
<gene>
    <name type="primary">APOC1B</name>
</gene>
<name>APO1B_PANTR</name>
<proteinExistence type="evidence at protein level"/>
<organism>
    <name type="scientific">Pan troglodytes</name>
    <name type="common">Chimpanzee</name>
    <dbReference type="NCBI Taxonomy" id="9598"/>
    <lineage>
        <taxon>Eukaryota</taxon>
        <taxon>Metazoa</taxon>
        <taxon>Chordata</taxon>
        <taxon>Craniata</taxon>
        <taxon>Vertebrata</taxon>
        <taxon>Euteleostomi</taxon>
        <taxon>Mammalia</taxon>
        <taxon>Eutheria</taxon>
        <taxon>Euarchontoglires</taxon>
        <taxon>Primates</taxon>
        <taxon>Haplorrhini</taxon>
        <taxon>Catarrhini</taxon>
        <taxon>Hominidae</taxon>
        <taxon>Pan</taxon>
    </lineage>
</organism>
<protein>
    <recommendedName>
        <fullName>Apolipoprotein C-I, basic form</fullName>
        <shortName>Apo-CIB</shortName>
        <shortName>ApoC-IB</shortName>
    </recommendedName>
    <alternativeName>
        <fullName>Apolipoprotein C1B</fullName>
    </alternativeName>
    <component>
        <recommendedName>
            <fullName>Cholesteryl ester transfer inhibitor protein</fullName>
            <shortName>CETIP</shortName>
        </recommendedName>
    </component>
    <component>
        <recommendedName>
            <fullName>Truncated apolipoprotein C-I, basic form</fullName>
            <shortName>Apo-CIB'</shortName>
            <shortName>ApoC-IB'</shortName>
        </recommendedName>
    </component>
</protein>